<dbReference type="EC" id="5.1.3.41" evidence="1"/>
<dbReference type="EMBL" id="AE005174">
    <property type="protein sequence ID" value="AAG58480.1"/>
    <property type="molecule type" value="Genomic_DNA"/>
</dbReference>
<dbReference type="EMBL" id="BA000007">
    <property type="protein sequence ID" value="BAB37646.1"/>
    <property type="molecule type" value="Genomic_DNA"/>
</dbReference>
<dbReference type="PIR" id="D86002">
    <property type="entry name" value="D86002"/>
</dbReference>
<dbReference type="PIR" id="G91156">
    <property type="entry name" value="G91156"/>
</dbReference>
<dbReference type="RefSeq" id="NP_312250.1">
    <property type="nucleotide sequence ID" value="NC_002695.1"/>
</dbReference>
<dbReference type="RefSeq" id="WP_000847833.1">
    <property type="nucleotide sequence ID" value="NZ_VOAI01000004.1"/>
</dbReference>
<dbReference type="SMR" id="Q8X840"/>
<dbReference type="STRING" id="155864.Z4733"/>
<dbReference type="GeneID" id="915922"/>
<dbReference type="KEGG" id="ece:Z4733"/>
<dbReference type="KEGG" id="ecs:ECs_4223"/>
<dbReference type="PATRIC" id="fig|386585.9.peg.4408"/>
<dbReference type="eggNOG" id="COG1082">
    <property type="taxonomic scope" value="Bacteria"/>
</dbReference>
<dbReference type="HOGENOM" id="CLU_050006_5_1_6"/>
<dbReference type="OMA" id="TRHIHIE"/>
<dbReference type="Proteomes" id="UP000000558">
    <property type="component" value="Chromosome"/>
</dbReference>
<dbReference type="Proteomes" id="UP000002519">
    <property type="component" value="Chromosome"/>
</dbReference>
<dbReference type="GO" id="GO:0016853">
    <property type="term" value="F:isomerase activity"/>
    <property type="evidence" value="ECO:0007669"/>
    <property type="project" value="UniProtKB-KW"/>
</dbReference>
<dbReference type="GO" id="GO:0046872">
    <property type="term" value="F:metal ion binding"/>
    <property type="evidence" value="ECO:0007669"/>
    <property type="project" value="UniProtKB-KW"/>
</dbReference>
<dbReference type="FunFam" id="3.20.20.150:FF:000013">
    <property type="entry name" value="Fructoselysine 3-epimerase"/>
    <property type="match status" value="1"/>
</dbReference>
<dbReference type="Gene3D" id="3.20.20.150">
    <property type="entry name" value="Divalent-metal-dependent TIM barrel enzymes"/>
    <property type="match status" value="1"/>
</dbReference>
<dbReference type="InterPro" id="IPR050312">
    <property type="entry name" value="IolE/XylAMocC-like"/>
</dbReference>
<dbReference type="InterPro" id="IPR036237">
    <property type="entry name" value="Xyl_isomerase-like_sf"/>
</dbReference>
<dbReference type="InterPro" id="IPR013022">
    <property type="entry name" value="Xyl_isomerase-like_TIM-brl"/>
</dbReference>
<dbReference type="NCBIfam" id="NF007360">
    <property type="entry name" value="PRK09856.1"/>
    <property type="match status" value="1"/>
</dbReference>
<dbReference type="PANTHER" id="PTHR12110">
    <property type="entry name" value="HYDROXYPYRUVATE ISOMERASE"/>
    <property type="match status" value="1"/>
</dbReference>
<dbReference type="PANTHER" id="PTHR12110:SF21">
    <property type="entry name" value="XYLOSE ISOMERASE-LIKE TIM BARREL DOMAIN-CONTAINING PROTEIN"/>
    <property type="match status" value="1"/>
</dbReference>
<dbReference type="Pfam" id="PF01261">
    <property type="entry name" value="AP_endonuc_2"/>
    <property type="match status" value="1"/>
</dbReference>
<dbReference type="SUPFAM" id="SSF51658">
    <property type="entry name" value="Xylose isomerase-like"/>
    <property type="match status" value="1"/>
</dbReference>
<comment type="function">
    <text evidence="1">Catalyzes the reversible interconversion of fructoselysine with its C-3 epimer, psicoselysine. Allows E.coli to utilize psicoselysine for growth. Does not act on psicose or fructoselysine 6-phosphate.</text>
</comment>
<comment type="catalytic activity">
    <reaction evidence="1">
        <text>N(6)-(D-psicosyl)-L-lysine = N(6)-(D-fructosyl)-L-lysine</text>
        <dbReference type="Rhea" id="RHEA:28390"/>
        <dbReference type="ChEBI" id="CHEBI:61393"/>
        <dbReference type="ChEBI" id="CHEBI:61403"/>
        <dbReference type="EC" id="5.1.3.41"/>
    </reaction>
</comment>
<comment type="cofactor">
    <cofactor evidence="1">
        <name>Ni(2+)</name>
        <dbReference type="ChEBI" id="CHEBI:49786"/>
    </cofactor>
    <cofactor evidence="1">
        <name>Co(2+)</name>
        <dbReference type="ChEBI" id="CHEBI:48828"/>
    </cofactor>
    <text evidence="1">Can use Ni(2+) or Co(2+) in vitro, and, to a lesser extent, Fe(2+) or Mn(2+), but not Ca(2+) or Cu(2+).</text>
</comment>
<comment type="subunit">
    <text evidence="1">Homooctamer.</text>
</comment>
<comment type="similarity">
    <text evidence="3">Belongs to the FrlC family.</text>
</comment>
<reference key="1">
    <citation type="journal article" date="2001" name="Nature">
        <title>Genome sequence of enterohaemorrhagic Escherichia coli O157:H7.</title>
        <authorList>
            <person name="Perna N.T."/>
            <person name="Plunkett G. III"/>
            <person name="Burland V."/>
            <person name="Mau B."/>
            <person name="Glasner J.D."/>
            <person name="Rose D.J."/>
            <person name="Mayhew G.F."/>
            <person name="Evans P.S."/>
            <person name="Gregor J."/>
            <person name="Kirkpatrick H.A."/>
            <person name="Posfai G."/>
            <person name="Hackett J."/>
            <person name="Klink S."/>
            <person name="Boutin A."/>
            <person name="Shao Y."/>
            <person name="Miller L."/>
            <person name="Grotbeck E.J."/>
            <person name="Davis N.W."/>
            <person name="Lim A."/>
            <person name="Dimalanta E.T."/>
            <person name="Potamousis K."/>
            <person name="Apodaca J."/>
            <person name="Anantharaman T.S."/>
            <person name="Lin J."/>
            <person name="Yen G."/>
            <person name="Schwartz D.C."/>
            <person name="Welch R.A."/>
            <person name="Blattner F.R."/>
        </authorList>
    </citation>
    <scope>NUCLEOTIDE SEQUENCE [LARGE SCALE GENOMIC DNA]</scope>
    <source>
        <strain>O157:H7 / EDL933 / ATCC 700927 / EHEC</strain>
    </source>
</reference>
<reference key="2">
    <citation type="journal article" date="2001" name="DNA Res.">
        <title>Complete genome sequence of enterohemorrhagic Escherichia coli O157:H7 and genomic comparison with a laboratory strain K-12.</title>
        <authorList>
            <person name="Hayashi T."/>
            <person name="Makino K."/>
            <person name="Ohnishi M."/>
            <person name="Kurokawa K."/>
            <person name="Ishii K."/>
            <person name="Yokoyama K."/>
            <person name="Han C.-G."/>
            <person name="Ohtsubo E."/>
            <person name="Nakayama K."/>
            <person name="Murata T."/>
            <person name="Tanaka M."/>
            <person name="Tobe T."/>
            <person name="Iida T."/>
            <person name="Takami H."/>
            <person name="Honda T."/>
            <person name="Sasakawa C."/>
            <person name="Ogasawara N."/>
            <person name="Yasunaga T."/>
            <person name="Kuhara S."/>
            <person name="Shiba T."/>
            <person name="Hattori M."/>
            <person name="Shinagawa H."/>
        </authorList>
    </citation>
    <scope>NUCLEOTIDE SEQUENCE [LARGE SCALE GENOMIC DNA]</scope>
    <source>
        <strain>O157:H7 / Sakai / RIMD 0509952 / EHEC</strain>
    </source>
</reference>
<proteinExistence type="inferred from homology"/>
<protein>
    <recommendedName>
        <fullName evidence="1">Fructoselysine 3-epimerase</fullName>
        <ecNumber evidence="1">5.1.3.41</ecNumber>
    </recommendedName>
</protein>
<organism>
    <name type="scientific">Escherichia coli O157:H7</name>
    <dbReference type="NCBI Taxonomy" id="83334"/>
    <lineage>
        <taxon>Bacteria</taxon>
        <taxon>Pseudomonadati</taxon>
        <taxon>Pseudomonadota</taxon>
        <taxon>Gammaproteobacteria</taxon>
        <taxon>Enterobacterales</taxon>
        <taxon>Enterobacteriaceae</taxon>
        <taxon>Escherichia</taxon>
    </lineage>
</organism>
<gene>
    <name type="primary">frlC</name>
    <name type="ordered locus">Z4733</name>
    <name type="ordered locus">ECs4223</name>
</gene>
<accession>Q8X840</accession>
<feature type="chain" id="PRO_0000087337" description="Fructoselysine 3-epimerase">
    <location>
        <begin position="1"/>
        <end position="275"/>
    </location>
</feature>
<feature type="active site" description="Proton donor/acceptor" evidence="2">
    <location>
        <position position="148"/>
    </location>
</feature>
<feature type="active site" description="Proton donor/acceptor" evidence="2">
    <location>
        <position position="247"/>
    </location>
</feature>
<feature type="binding site" evidence="2">
    <location>
        <position position="148"/>
    </location>
    <ligand>
        <name>a divalent metal cation</name>
        <dbReference type="ChEBI" id="CHEBI:60240"/>
    </ligand>
</feature>
<feature type="binding site" evidence="2">
    <location>
        <position position="181"/>
    </location>
    <ligand>
        <name>a divalent metal cation</name>
        <dbReference type="ChEBI" id="CHEBI:60240"/>
    </ligand>
</feature>
<feature type="binding site" evidence="2">
    <location>
        <position position="207"/>
    </location>
    <ligand>
        <name>a divalent metal cation</name>
        <dbReference type="ChEBI" id="CHEBI:60240"/>
    </ligand>
</feature>
<feature type="binding site" evidence="2">
    <location>
        <position position="247"/>
    </location>
    <ligand>
        <name>a divalent metal cation</name>
        <dbReference type="ChEBI" id="CHEBI:60240"/>
    </ligand>
</feature>
<name>FRLC_ECO57</name>
<keyword id="KW-0170">Cobalt</keyword>
<keyword id="KW-0413">Isomerase</keyword>
<keyword id="KW-0479">Metal-binding</keyword>
<keyword id="KW-0533">Nickel</keyword>
<keyword id="KW-1185">Reference proteome</keyword>
<sequence>MKTGMFTCGHQRLPIEHAFRDASELGYDGIEIWGGRPHAFAPDLKAGGIKQIKALAQTYQMPIIGYTPETNGYPYNMMLGDEHMRRESLDMIKLAMDMAKEMNAGYTLISAAHAGYLTPPNVIWGRLAENLSELCEYAENIGMDLILEPLTPYESNVVCNANDVLHALALVPSPRLFSMVDICAPYVQAEPVMSYFDKLGDKLRHLHIVDSDGASDTHYIPGEGKMPLRELMRDIIDRGYEGYCTVELVTMYMNEPRLYARQALERFRALLPEDE</sequence>
<evidence type="ECO:0000250" key="1">
    <source>
        <dbReference type="UniProtKB" id="P45541"/>
    </source>
</evidence>
<evidence type="ECO:0000250" key="2">
    <source>
        <dbReference type="UniProtKB" id="Q9WYP7"/>
    </source>
</evidence>
<evidence type="ECO:0000305" key="3"/>